<gene>
    <name evidence="1" type="primary">mnmG</name>
    <name evidence="1" type="synonym">gidA</name>
    <name type="ordered locus">PSPA7_6367</name>
</gene>
<name>MNMG_PSEP7</name>
<protein>
    <recommendedName>
        <fullName evidence="1">tRNA uridine 5-carboxymethylaminomethyl modification enzyme MnmG</fullName>
    </recommendedName>
    <alternativeName>
        <fullName evidence="1">Glucose-inhibited division protein A</fullName>
    </alternativeName>
</protein>
<accession>A6VF43</accession>
<comment type="function">
    <text evidence="1">NAD-binding protein involved in the addition of a carboxymethylaminomethyl (cmnm) group at the wobble position (U34) of certain tRNAs, forming tRNA-cmnm(5)s(2)U34.</text>
</comment>
<comment type="cofactor">
    <cofactor evidence="1">
        <name>FAD</name>
        <dbReference type="ChEBI" id="CHEBI:57692"/>
    </cofactor>
</comment>
<comment type="subunit">
    <text evidence="1">Homodimer. Heterotetramer of two MnmE and two MnmG subunits.</text>
</comment>
<comment type="subcellular location">
    <subcellularLocation>
        <location evidence="1">Cytoplasm</location>
    </subcellularLocation>
</comment>
<comment type="similarity">
    <text evidence="1">Belongs to the MnmG family.</text>
</comment>
<sequence length="631" mass="69706">MVDFPTRFDVIVIGGGHAGTEAALAAARMGVKTLLLTHNVETLGQMSCNPAIGGIGKSHLVKEIDALGGAMAEATDKGGIQFRILNSRKGPAVRATRAQADRVLYKAAIRHTLENQPNLWIFQQACDDLIVEQDQVRGVVTQMGLRFHADNVVLTTGTFLGGLIHIGLENYSGGRAGDPPSIALARRLRELPLRVGRLKTGTPPRIDGRSVVFSVMTEQPGDTPIPVMSFLGSKEQHPEQVSCWITHTNARTHEIIAANLDRSPMYSGVIEGIGPRYCPSIEDKIHRFADKESHQVFLEPEGLTTHELYPNGISTSLPFDVQLQIVRSIRGMENAHIVRPGYAIEYDFFDPRDLKYSLETKVIGGLFFAGQINGTTGYEEAGAQGLLAGANAALRAQGKDSWCPRRDEAYIGVLVDDLITLGTQEPYRMFTSRAEYRLILREDNADLRLTEKGRELGLVDDRRWAAFEAKREGIEREEQRLKSTWVRPNTPQGEAIAERFGTPLTHEYNLLNLLSRPEIDYASLVEITGDAVDNPQVAEQVEIRTKYAGYIDRQQEEIARLRASEDTRLPVDIDYLGISGLSKEIQNKLNQARPETLGQASRIPGVTPAAISLLLIHLKKRASGRQLEQSA</sequence>
<proteinExistence type="inferred from homology"/>
<keyword id="KW-0963">Cytoplasm</keyword>
<keyword id="KW-0274">FAD</keyword>
<keyword id="KW-0285">Flavoprotein</keyword>
<keyword id="KW-0520">NAD</keyword>
<keyword id="KW-0819">tRNA processing</keyword>
<feature type="chain" id="PRO_1000016643" description="tRNA uridine 5-carboxymethylaminomethyl modification enzyme MnmG">
    <location>
        <begin position="1"/>
        <end position="631"/>
    </location>
</feature>
<feature type="binding site" evidence="1">
    <location>
        <begin position="14"/>
        <end position="19"/>
    </location>
    <ligand>
        <name>FAD</name>
        <dbReference type="ChEBI" id="CHEBI:57692"/>
    </ligand>
</feature>
<feature type="binding site" evidence="1">
    <location>
        <begin position="274"/>
        <end position="288"/>
    </location>
    <ligand>
        <name>NAD(+)</name>
        <dbReference type="ChEBI" id="CHEBI:57540"/>
    </ligand>
</feature>
<organism>
    <name type="scientific">Pseudomonas paraeruginosa (strain DSM 24068 / PA7)</name>
    <name type="common">Pseudomonas aeruginosa (strain PA7)</name>
    <dbReference type="NCBI Taxonomy" id="381754"/>
    <lineage>
        <taxon>Bacteria</taxon>
        <taxon>Pseudomonadati</taxon>
        <taxon>Pseudomonadota</taxon>
        <taxon>Gammaproteobacteria</taxon>
        <taxon>Pseudomonadales</taxon>
        <taxon>Pseudomonadaceae</taxon>
        <taxon>Pseudomonas</taxon>
        <taxon>Pseudomonas paraeruginosa</taxon>
    </lineage>
</organism>
<reference key="1">
    <citation type="submission" date="2007-06" db="EMBL/GenBank/DDBJ databases">
        <authorList>
            <person name="Dodson R.J."/>
            <person name="Harkins D."/>
            <person name="Paulsen I.T."/>
        </authorList>
    </citation>
    <scope>NUCLEOTIDE SEQUENCE [LARGE SCALE GENOMIC DNA]</scope>
    <source>
        <strain>DSM 24068 / PA7</strain>
    </source>
</reference>
<dbReference type="EMBL" id="CP000744">
    <property type="protein sequence ID" value="ABR82051.1"/>
    <property type="molecule type" value="Genomic_DNA"/>
</dbReference>
<dbReference type="RefSeq" id="WP_041025442.1">
    <property type="nucleotide sequence ID" value="NC_009656.1"/>
</dbReference>
<dbReference type="SMR" id="A6VF43"/>
<dbReference type="KEGG" id="pap:PSPA7_6367"/>
<dbReference type="HOGENOM" id="CLU_007831_2_2_6"/>
<dbReference type="Proteomes" id="UP000001582">
    <property type="component" value="Chromosome"/>
</dbReference>
<dbReference type="GO" id="GO:0005829">
    <property type="term" value="C:cytosol"/>
    <property type="evidence" value="ECO:0007669"/>
    <property type="project" value="TreeGrafter"/>
</dbReference>
<dbReference type="GO" id="GO:0050660">
    <property type="term" value="F:flavin adenine dinucleotide binding"/>
    <property type="evidence" value="ECO:0007669"/>
    <property type="project" value="UniProtKB-UniRule"/>
</dbReference>
<dbReference type="GO" id="GO:0030488">
    <property type="term" value="P:tRNA methylation"/>
    <property type="evidence" value="ECO:0007669"/>
    <property type="project" value="TreeGrafter"/>
</dbReference>
<dbReference type="GO" id="GO:0002098">
    <property type="term" value="P:tRNA wobble uridine modification"/>
    <property type="evidence" value="ECO:0007669"/>
    <property type="project" value="InterPro"/>
</dbReference>
<dbReference type="FunFam" id="1.10.10.1800:FF:000001">
    <property type="entry name" value="tRNA uridine 5-carboxymethylaminomethyl modification enzyme MnmG"/>
    <property type="match status" value="1"/>
</dbReference>
<dbReference type="FunFam" id="1.10.150.570:FF:000001">
    <property type="entry name" value="tRNA uridine 5-carboxymethylaminomethyl modification enzyme MnmG"/>
    <property type="match status" value="1"/>
</dbReference>
<dbReference type="FunFam" id="3.50.50.60:FF:000002">
    <property type="entry name" value="tRNA uridine 5-carboxymethylaminomethyl modification enzyme MnmG"/>
    <property type="match status" value="1"/>
</dbReference>
<dbReference type="FunFam" id="3.50.50.60:FF:000010">
    <property type="entry name" value="tRNA uridine 5-carboxymethylaminomethyl modification enzyme MnmG"/>
    <property type="match status" value="1"/>
</dbReference>
<dbReference type="Gene3D" id="3.50.50.60">
    <property type="entry name" value="FAD/NAD(P)-binding domain"/>
    <property type="match status" value="2"/>
</dbReference>
<dbReference type="Gene3D" id="1.10.150.570">
    <property type="entry name" value="GidA associated domain, C-terminal subdomain"/>
    <property type="match status" value="1"/>
</dbReference>
<dbReference type="Gene3D" id="1.10.10.1800">
    <property type="entry name" value="tRNA uridine 5-carboxymethylaminomethyl modification enzyme MnmG/GidA"/>
    <property type="match status" value="1"/>
</dbReference>
<dbReference type="HAMAP" id="MF_00129">
    <property type="entry name" value="MnmG_GidA"/>
    <property type="match status" value="1"/>
</dbReference>
<dbReference type="InterPro" id="IPR036188">
    <property type="entry name" value="FAD/NAD-bd_sf"/>
</dbReference>
<dbReference type="InterPro" id="IPR049312">
    <property type="entry name" value="GIDA_C_N"/>
</dbReference>
<dbReference type="InterPro" id="IPR004416">
    <property type="entry name" value="MnmG"/>
</dbReference>
<dbReference type="InterPro" id="IPR002218">
    <property type="entry name" value="MnmG-rel"/>
</dbReference>
<dbReference type="InterPro" id="IPR020595">
    <property type="entry name" value="MnmG-rel_CS"/>
</dbReference>
<dbReference type="InterPro" id="IPR026904">
    <property type="entry name" value="MnmG_C"/>
</dbReference>
<dbReference type="InterPro" id="IPR047001">
    <property type="entry name" value="MnmG_C_subdom"/>
</dbReference>
<dbReference type="InterPro" id="IPR044920">
    <property type="entry name" value="MnmG_C_subdom_sf"/>
</dbReference>
<dbReference type="InterPro" id="IPR040131">
    <property type="entry name" value="MnmG_N"/>
</dbReference>
<dbReference type="NCBIfam" id="TIGR00136">
    <property type="entry name" value="mnmG_gidA"/>
    <property type="match status" value="1"/>
</dbReference>
<dbReference type="PANTHER" id="PTHR11806">
    <property type="entry name" value="GLUCOSE INHIBITED DIVISION PROTEIN A"/>
    <property type="match status" value="1"/>
</dbReference>
<dbReference type="PANTHER" id="PTHR11806:SF0">
    <property type="entry name" value="PROTEIN MTO1 HOMOLOG, MITOCHONDRIAL"/>
    <property type="match status" value="1"/>
</dbReference>
<dbReference type="Pfam" id="PF01134">
    <property type="entry name" value="GIDA"/>
    <property type="match status" value="1"/>
</dbReference>
<dbReference type="Pfam" id="PF21680">
    <property type="entry name" value="GIDA_C_1st"/>
    <property type="match status" value="1"/>
</dbReference>
<dbReference type="Pfam" id="PF13932">
    <property type="entry name" value="SAM_GIDA_C"/>
    <property type="match status" value="1"/>
</dbReference>
<dbReference type="PRINTS" id="PR00368">
    <property type="entry name" value="FADPNR"/>
</dbReference>
<dbReference type="SMART" id="SM01228">
    <property type="entry name" value="GIDA_assoc_3"/>
    <property type="match status" value="1"/>
</dbReference>
<dbReference type="SUPFAM" id="SSF51905">
    <property type="entry name" value="FAD/NAD(P)-binding domain"/>
    <property type="match status" value="1"/>
</dbReference>
<dbReference type="PROSITE" id="PS01280">
    <property type="entry name" value="GIDA_1"/>
    <property type="match status" value="1"/>
</dbReference>
<dbReference type="PROSITE" id="PS01281">
    <property type="entry name" value="GIDA_2"/>
    <property type="match status" value="1"/>
</dbReference>
<evidence type="ECO:0000255" key="1">
    <source>
        <dbReference type="HAMAP-Rule" id="MF_00129"/>
    </source>
</evidence>